<gene>
    <name evidence="1" type="primary">pyrE</name>
    <name type="ordered locus">MMP1492</name>
</gene>
<accession>Q6LX60</accession>
<protein>
    <recommendedName>
        <fullName evidence="1">Orotate phosphoribosyltransferase</fullName>
        <shortName evidence="1">OPRT</shortName>
        <shortName evidence="1">OPRTase</shortName>
        <ecNumber evidence="1">2.4.2.10</ecNumber>
    </recommendedName>
</protein>
<keyword id="KW-0328">Glycosyltransferase</keyword>
<keyword id="KW-0460">Magnesium</keyword>
<keyword id="KW-0665">Pyrimidine biosynthesis</keyword>
<keyword id="KW-1185">Reference proteome</keyword>
<keyword id="KW-0808">Transferase</keyword>
<dbReference type="EC" id="2.4.2.10" evidence="1"/>
<dbReference type="EMBL" id="BX950229">
    <property type="protein sequence ID" value="CAF31048.1"/>
    <property type="molecule type" value="Genomic_DNA"/>
</dbReference>
<dbReference type="RefSeq" id="WP_011171436.1">
    <property type="nucleotide sequence ID" value="NC_005791.1"/>
</dbReference>
<dbReference type="SMR" id="Q6LX60"/>
<dbReference type="STRING" id="267377.MMP1492"/>
<dbReference type="EnsemblBacteria" id="CAF31048">
    <property type="protein sequence ID" value="CAF31048"/>
    <property type="gene ID" value="MMP1492"/>
</dbReference>
<dbReference type="GeneID" id="2761196"/>
<dbReference type="KEGG" id="mmp:MMP1492"/>
<dbReference type="PATRIC" id="fig|267377.15.peg.1529"/>
<dbReference type="eggNOG" id="arCOG00029">
    <property type="taxonomic scope" value="Archaea"/>
</dbReference>
<dbReference type="HOGENOM" id="CLU_074878_2_0_2"/>
<dbReference type="OrthoDB" id="9089at2157"/>
<dbReference type="UniPathway" id="UPA00070">
    <property type="reaction ID" value="UER00119"/>
</dbReference>
<dbReference type="Proteomes" id="UP000000590">
    <property type="component" value="Chromosome"/>
</dbReference>
<dbReference type="GO" id="GO:0000287">
    <property type="term" value="F:magnesium ion binding"/>
    <property type="evidence" value="ECO:0007669"/>
    <property type="project" value="UniProtKB-UniRule"/>
</dbReference>
<dbReference type="GO" id="GO:0004588">
    <property type="term" value="F:orotate phosphoribosyltransferase activity"/>
    <property type="evidence" value="ECO:0007669"/>
    <property type="project" value="UniProtKB-UniRule"/>
</dbReference>
<dbReference type="GO" id="GO:0044205">
    <property type="term" value="P:'de novo' UMP biosynthetic process"/>
    <property type="evidence" value="ECO:0007669"/>
    <property type="project" value="UniProtKB-UniRule"/>
</dbReference>
<dbReference type="GO" id="GO:0019856">
    <property type="term" value="P:pyrimidine nucleobase biosynthetic process"/>
    <property type="evidence" value="ECO:0007669"/>
    <property type="project" value="TreeGrafter"/>
</dbReference>
<dbReference type="CDD" id="cd06223">
    <property type="entry name" value="PRTases_typeI"/>
    <property type="match status" value="1"/>
</dbReference>
<dbReference type="Gene3D" id="3.40.50.2020">
    <property type="match status" value="1"/>
</dbReference>
<dbReference type="HAMAP" id="MF_01208">
    <property type="entry name" value="PyrE"/>
    <property type="match status" value="1"/>
</dbReference>
<dbReference type="InterPro" id="IPR023031">
    <property type="entry name" value="OPRT"/>
</dbReference>
<dbReference type="InterPro" id="IPR004467">
    <property type="entry name" value="Or_phspho_trans_dom"/>
</dbReference>
<dbReference type="InterPro" id="IPR000836">
    <property type="entry name" value="PRibTrfase_dom"/>
</dbReference>
<dbReference type="InterPro" id="IPR029057">
    <property type="entry name" value="PRTase-like"/>
</dbReference>
<dbReference type="NCBIfam" id="TIGR00336">
    <property type="entry name" value="pyrE"/>
    <property type="match status" value="1"/>
</dbReference>
<dbReference type="PANTHER" id="PTHR19278">
    <property type="entry name" value="OROTATE PHOSPHORIBOSYLTRANSFERASE"/>
    <property type="match status" value="1"/>
</dbReference>
<dbReference type="PANTHER" id="PTHR19278:SF9">
    <property type="entry name" value="URIDINE 5'-MONOPHOSPHATE SYNTHASE"/>
    <property type="match status" value="1"/>
</dbReference>
<dbReference type="Pfam" id="PF00156">
    <property type="entry name" value="Pribosyltran"/>
    <property type="match status" value="1"/>
</dbReference>
<dbReference type="SUPFAM" id="SSF53271">
    <property type="entry name" value="PRTase-like"/>
    <property type="match status" value="1"/>
</dbReference>
<proteinExistence type="inferred from homology"/>
<sequence length="185" mass="20257">MVTTEEISLKNELIRLLKDVNCVKFGDFTLASGKQSKYYVDIKKATTNPKVLKAAAKLVNYYVSKENNENLKIAGVELGSVSIATAVSLETEKDLLIIRKKAKEYGTKNKIEGELNPGDNVIVMEDVTTTGGSVSKAVDEIRAVSGNVKKIYVIVDRQEGAKENLAQNNVELIPLVTIEELGLNK</sequence>
<name>PYRE_METMP</name>
<organism>
    <name type="scientific">Methanococcus maripaludis (strain DSM 14266 / JCM 13030 / NBRC 101832 / S2 / LL)</name>
    <dbReference type="NCBI Taxonomy" id="267377"/>
    <lineage>
        <taxon>Archaea</taxon>
        <taxon>Methanobacteriati</taxon>
        <taxon>Methanobacteriota</taxon>
        <taxon>Methanomada group</taxon>
        <taxon>Methanococci</taxon>
        <taxon>Methanococcales</taxon>
        <taxon>Methanococcaceae</taxon>
        <taxon>Methanococcus</taxon>
    </lineage>
</organism>
<comment type="function">
    <text evidence="1">Catalyzes the transfer of a ribosyl phosphate group from 5-phosphoribose 1-diphosphate to orotate, leading to the formation of orotidine monophosphate (OMP).</text>
</comment>
<comment type="catalytic activity">
    <reaction evidence="1">
        <text>orotidine 5'-phosphate + diphosphate = orotate + 5-phospho-alpha-D-ribose 1-diphosphate</text>
        <dbReference type="Rhea" id="RHEA:10380"/>
        <dbReference type="ChEBI" id="CHEBI:30839"/>
        <dbReference type="ChEBI" id="CHEBI:33019"/>
        <dbReference type="ChEBI" id="CHEBI:57538"/>
        <dbReference type="ChEBI" id="CHEBI:58017"/>
        <dbReference type="EC" id="2.4.2.10"/>
    </reaction>
</comment>
<comment type="cofactor">
    <cofactor evidence="1">
        <name>Mg(2+)</name>
        <dbReference type="ChEBI" id="CHEBI:18420"/>
    </cofactor>
</comment>
<comment type="pathway">
    <text evidence="1">Pyrimidine metabolism; UMP biosynthesis via de novo pathway; UMP from orotate: step 1/2.</text>
</comment>
<comment type="subunit">
    <text evidence="1">Homodimer.</text>
</comment>
<comment type="similarity">
    <text evidence="1">Belongs to the purine/pyrimidine phosphoribosyltransferase family. PyrE subfamily.</text>
</comment>
<feature type="chain" id="PRO_0000110782" description="Orotate phosphoribosyltransferase">
    <location>
        <begin position="1"/>
        <end position="185"/>
    </location>
</feature>
<feature type="binding site" evidence="1">
    <location>
        <position position="99"/>
    </location>
    <ligand>
        <name>5-phospho-alpha-D-ribose 1-diphosphate</name>
        <dbReference type="ChEBI" id="CHEBI:58017"/>
        <note>ligand shared between dimeric partners</note>
    </ligand>
</feature>
<feature type="binding site" description="in other chain" evidence="1">
    <location>
        <position position="100"/>
    </location>
    <ligand>
        <name>5-phospho-alpha-D-ribose 1-diphosphate</name>
        <dbReference type="ChEBI" id="CHEBI:58017"/>
        <note>ligand shared between dimeric partners</note>
    </ligand>
</feature>
<feature type="binding site" evidence="1">
    <location>
        <position position="103"/>
    </location>
    <ligand>
        <name>5-phospho-alpha-D-ribose 1-diphosphate</name>
        <dbReference type="ChEBI" id="CHEBI:58017"/>
        <note>ligand shared between dimeric partners</note>
    </ligand>
</feature>
<feature type="binding site" description="in other chain" evidence="1">
    <location>
        <begin position="125"/>
        <end position="133"/>
    </location>
    <ligand>
        <name>5-phospho-alpha-D-ribose 1-diphosphate</name>
        <dbReference type="ChEBI" id="CHEBI:58017"/>
        <note>ligand shared between dimeric partners</note>
    </ligand>
</feature>
<feature type="binding site" evidence="1">
    <location>
        <position position="129"/>
    </location>
    <ligand>
        <name>orotate</name>
        <dbReference type="ChEBI" id="CHEBI:30839"/>
    </ligand>
</feature>
<feature type="binding site" evidence="1">
    <location>
        <position position="157"/>
    </location>
    <ligand>
        <name>orotate</name>
        <dbReference type="ChEBI" id="CHEBI:30839"/>
    </ligand>
</feature>
<reference key="1">
    <citation type="journal article" date="2004" name="J. Bacteriol.">
        <title>Complete genome sequence of the genetically tractable hydrogenotrophic methanogen Methanococcus maripaludis.</title>
        <authorList>
            <person name="Hendrickson E.L."/>
            <person name="Kaul R."/>
            <person name="Zhou Y."/>
            <person name="Bovee D."/>
            <person name="Chapman P."/>
            <person name="Chung J."/>
            <person name="Conway de Macario E."/>
            <person name="Dodsworth J.A."/>
            <person name="Gillett W."/>
            <person name="Graham D.E."/>
            <person name="Hackett M."/>
            <person name="Haydock A.K."/>
            <person name="Kang A."/>
            <person name="Land M.L."/>
            <person name="Levy R."/>
            <person name="Lie T.J."/>
            <person name="Major T.A."/>
            <person name="Moore B.C."/>
            <person name="Porat I."/>
            <person name="Palmeiri A."/>
            <person name="Rouse G."/>
            <person name="Saenphimmachak C."/>
            <person name="Soell D."/>
            <person name="Van Dien S."/>
            <person name="Wang T."/>
            <person name="Whitman W.B."/>
            <person name="Xia Q."/>
            <person name="Zhang Y."/>
            <person name="Larimer F.W."/>
            <person name="Olson M.V."/>
            <person name="Leigh J.A."/>
        </authorList>
    </citation>
    <scope>NUCLEOTIDE SEQUENCE [LARGE SCALE GENOMIC DNA]</scope>
    <source>
        <strain>DSM 14266 / JCM 13030 / NBRC 101832 / S2 / LL</strain>
    </source>
</reference>
<evidence type="ECO:0000255" key="1">
    <source>
        <dbReference type="HAMAP-Rule" id="MF_01208"/>
    </source>
</evidence>